<feature type="chain" id="PRO_0000198215" description="Ribosomal RNA large subunit methyltransferase H">
    <location>
        <begin position="1"/>
        <end position="158"/>
    </location>
</feature>
<feature type="binding site" evidence="1">
    <location>
        <position position="74"/>
    </location>
    <ligand>
        <name>S-adenosyl-L-methionine</name>
        <dbReference type="ChEBI" id="CHEBI:59789"/>
    </ligand>
</feature>
<feature type="binding site" evidence="1">
    <location>
        <position position="105"/>
    </location>
    <ligand>
        <name>S-adenosyl-L-methionine</name>
        <dbReference type="ChEBI" id="CHEBI:59789"/>
    </ligand>
</feature>
<feature type="binding site" evidence="1">
    <location>
        <begin position="124"/>
        <end position="129"/>
    </location>
    <ligand>
        <name>S-adenosyl-L-methionine</name>
        <dbReference type="ChEBI" id="CHEBI:59789"/>
    </ligand>
</feature>
<organism>
    <name type="scientific">Xylella fastidiosa (strain 9a5c)</name>
    <dbReference type="NCBI Taxonomy" id="160492"/>
    <lineage>
        <taxon>Bacteria</taxon>
        <taxon>Pseudomonadati</taxon>
        <taxon>Pseudomonadota</taxon>
        <taxon>Gammaproteobacteria</taxon>
        <taxon>Lysobacterales</taxon>
        <taxon>Lysobacteraceae</taxon>
        <taxon>Xylella</taxon>
    </lineage>
</organism>
<accession>Q9PGG4</accession>
<reference key="1">
    <citation type="journal article" date="2000" name="Nature">
        <title>The genome sequence of the plant pathogen Xylella fastidiosa.</title>
        <authorList>
            <person name="Simpson A.J.G."/>
            <person name="Reinach F.C."/>
            <person name="Arruda P."/>
            <person name="Abreu F.A."/>
            <person name="Acencio M."/>
            <person name="Alvarenga R."/>
            <person name="Alves L.M.C."/>
            <person name="Araya J.E."/>
            <person name="Baia G.S."/>
            <person name="Baptista C.S."/>
            <person name="Barros M.H."/>
            <person name="Bonaccorsi E.D."/>
            <person name="Bordin S."/>
            <person name="Bove J.M."/>
            <person name="Briones M.R.S."/>
            <person name="Bueno M.R.P."/>
            <person name="Camargo A.A."/>
            <person name="Camargo L.E.A."/>
            <person name="Carraro D.M."/>
            <person name="Carrer H."/>
            <person name="Colauto N.B."/>
            <person name="Colombo C."/>
            <person name="Costa F.F."/>
            <person name="Costa M.C.R."/>
            <person name="Costa-Neto C.M."/>
            <person name="Coutinho L.L."/>
            <person name="Cristofani M."/>
            <person name="Dias-Neto E."/>
            <person name="Docena C."/>
            <person name="El-Dorry H."/>
            <person name="Facincani A.P."/>
            <person name="Ferreira A.J.S."/>
            <person name="Ferreira V.C.A."/>
            <person name="Ferro J.A."/>
            <person name="Fraga J.S."/>
            <person name="Franca S.C."/>
            <person name="Franco M.C."/>
            <person name="Frohme M."/>
            <person name="Furlan L.R."/>
            <person name="Garnier M."/>
            <person name="Goldman G.H."/>
            <person name="Goldman M.H.S."/>
            <person name="Gomes S.L."/>
            <person name="Gruber A."/>
            <person name="Ho P.L."/>
            <person name="Hoheisel J.D."/>
            <person name="Junqueira M.L."/>
            <person name="Kemper E.L."/>
            <person name="Kitajima J.P."/>
            <person name="Krieger J.E."/>
            <person name="Kuramae E.E."/>
            <person name="Laigret F."/>
            <person name="Lambais M.R."/>
            <person name="Leite L.C.C."/>
            <person name="Lemos E.G.M."/>
            <person name="Lemos M.V.F."/>
            <person name="Lopes S.A."/>
            <person name="Lopes C.R."/>
            <person name="Machado J.A."/>
            <person name="Machado M.A."/>
            <person name="Madeira A.M.B.N."/>
            <person name="Madeira H.M.F."/>
            <person name="Marino C.L."/>
            <person name="Marques M.V."/>
            <person name="Martins E.A.L."/>
            <person name="Martins E.M.F."/>
            <person name="Matsukuma A.Y."/>
            <person name="Menck C.F.M."/>
            <person name="Miracca E.C."/>
            <person name="Miyaki C.Y."/>
            <person name="Monteiro-Vitorello C.B."/>
            <person name="Moon D.H."/>
            <person name="Nagai M.A."/>
            <person name="Nascimento A.L.T.O."/>
            <person name="Netto L.E.S."/>
            <person name="Nhani A. Jr."/>
            <person name="Nobrega F.G."/>
            <person name="Nunes L.R."/>
            <person name="Oliveira M.A."/>
            <person name="de Oliveira M.C."/>
            <person name="de Oliveira R.C."/>
            <person name="Palmieri D.A."/>
            <person name="Paris A."/>
            <person name="Peixoto B.R."/>
            <person name="Pereira G.A.G."/>
            <person name="Pereira H.A. Jr."/>
            <person name="Pesquero J.B."/>
            <person name="Quaggio R.B."/>
            <person name="Roberto P.G."/>
            <person name="Rodrigues V."/>
            <person name="de Rosa A.J.M."/>
            <person name="de Rosa V.E. Jr."/>
            <person name="de Sa R.G."/>
            <person name="Santelli R.V."/>
            <person name="Sawasaki H.E."/>
            <person name="da Silva A.C.R."/>
            <person name="da Silva A.M."/>
            <person name="da Silva F.R."/>
            <person name="Silva W.A. Jr."/>
            <person name="da Silveira J.F."/>
            <person name="Silvestri M.L.Z."/>
            <person name="Siqueira W.J."/>
            <person name="de Souza A.A."/>
            <person name="de Souza A.P."/>
            <person name="Terenzi M.F."/>
            <person name="Truffi D."/>
            <person name="Tsai S.M."/>
            <person name="Tsuhako M.H."/>
            <person name="Vallada H."/>
            <person name="Van Sluys M.A."/>
            <person name="Verjovski-Almeida S."/>
            <person name="Vettore A.L."/>
            <person name="Zago M.A."/>
            <person name="Zatz M."/>
            <person name="Meidanis J."/>
            <person name="Setubal J.C."/>
        </authorList>
    </citation>
    <scope>NUCLEOTIDE SEQUENCE [LARGE SCALE GENOMIC DNA]</scope>
    <source>
        <strain>9a5c</strain>
    </source>
</reference>
<dbReference type="EC" id="2.1.1.177" evidence="1"/>
<dbReference type="EMBL" id="AE003849">
    <property type="protein sequence ID" value="AAF83148.1"/>
    <property type="molecule type" value="Genomic_DNA"/>
</dbReference>
<dbReference type="PIR" id="E82818">
    <property type="entry name" value="E82818"/>
</dbReference>
<dbReference type="SMR" id="Q9PGG4"/>
<dbReference type="STRING" id="160492.XF_0338"/>
<dbReference type="KEGG" id="xfa:XF_0338"/>
<dbReference type="eggNOG" id="COG1576">
    <property type="taxonomic scope" value="Bacteria"/>
</dbReference>
<dbReference type="HOGENOM" id="CLU_100552_1_0_6"/>
<dbReference type="Proteomes" id="UP000000812">
    <property type="component" value="Chromosome"/>
</dbReference>
<dbReference type="GO" id="GO:0005737">
    <property type="term" value="C:cytoplasm"/>
    <property type="evidence" value="ECO:0007669"/>
    <property type="project" value="UniProtKB-SubCell"/>
</dbReference>
<dbReference type="GO" id="GO:0070038">
    <property type="term" value="F:rRNA (pseudouridine-N3-)-methyltransferase activity"/>
    <property type="evidence" value="ECO:0007669"/>
    <property type="project" value="UniProtKB-UniRule"/>
</dbReference>
<dbReference type="CDD" id="cd18081">
    <property type="entry name" value="RlmH-like"/>
    <property type="match status" value="1"/>
</dbReference>
<dbReference type="Gene3D" id="3.40.1280.10">
    <property type="match status" value="1"/>
</dbReference>
<dbReference type="HAMAP" id="MF_00658">
    <property type="entry name" value="23SrRNA_methyltr_H"/>
    <property type="match status" value="1"/>
</dbReference>
<dbReference type="InterPro" id="IPR029028">
    <property type="entry name" value="Alpha/beta_knot_MTases"/>
</dbReference>
<dbReference type="InterPro" id="IPR003742">
    <property type="entry name" value="RlmH-like"/>
</dbReference>
<dbReference type="InterPro" id="IPR029026">
    <property type="entry name" value="tRNA_m1G_MTases_N"/>
</dbReference>
<dbReference type="NCBIfam" id="NF000986">
    <property type="entry name" value="PRK00103.1-4"/>
    <property type="match status" value="1"/>
</dbReference>
<dbReference type="NCBIfam" id="TIGR00246">
    <property type="entry name" value="tRNA_RlmH_YbeA"/>
    <property type="match status" value="1"/>
</dbReference>
<dbReference type="PANTHER" id="PTHR33603">
    <property type="entry name" value="METHYLTRANSFERASE"/>
    <property type="match status" value="1"/>
</dbReference>
<dbReference type="PANTHER" id="PTHR33603:SF1">
    <property type="entry name" value="RIBOSOMAL RNA LARGE SUBUNIT METHYLTRANSFERASE H"/>
    <property type="match status" value="1"/>
</dbReference>
<dbReference type="Pfam" id="PF02590">
    <property type="entry name" value="SPOUT_MTase"/>
    <property type="match status" value="1"/>
</dbReference>
<dbReference type="PIRSF" id="PIRSF004505">
    <property type="entry name" value="MT_bac"/>
    <property type="match status" value="1"/>
</dbReference>
<dbReference type="SUPFAM" id="SSF75217">
    <property type="entry name" value="alpha/beta knot"/>
    <property type="match status" value="1"/>
</dbReference>
<sequence length="158" mass="18052">MMKCLLIATGERVPTWVAQGFAEYHKRLSYWLPLELVEIEPSLRGKNHDPQQAIEDEGRRVMAALPKQPYAVTLDVKGKSLNSEQLAKRMEHWRGLGRNLVFLIGGPEGHSQEVLNISNERWSLGPLTLPHMLVRLIVVEQLYRAATILTNHPYHRGK</sequence>
<keyword id="KW-0963">Cytoplasm</keyword>
<keyword id="KW-0489">Methyltransferase</keyword>
<keyword id="KW-0698">rRNA processing</keyword>
<keyword id="KW-0949">S-adenosyl-L-methionine</keyword>
<keyword id="KW-0808">Transferase</keyword>
<proteinExistence type="inferred from homology"/>
<evidence type="ECO:0000255" key="1">
    <source>
        <dbReference type="HAMAP-Rule" id="MF_00658"/>
    </source>
</evidence>
<name>RLMH_XYLFA</name>
<comment type="function">
    <text evidence="1">Specifically methylates the pseudouridine at position 1915 (m3Psi1915) in 23S rRNA.</text>
</comment>
<comment type="catalytic activity">
    <reaction evidence="1">
        <text>pseudouridine(1915) in 23S rRNA + S-adenosyl-L-methionine = N(3)-methylpseudouridine(1915) in 23S rRNA + S-adenosyl-L-homocysteine + H(+)</text>
        <dbReference type="Rhea" id="RHEA:42752"/>
        <dbReference type="Rhea" id="RHEA-COMP:10221"/>
        <dbReference type="Rhea" id="RHEA-COMP:10222"/>
        <dbReference type="ChEBI" id="CHEBI:15378"/>
        <dbReference type="ChEBI" id="CHEBI:57856"/>
        <dbReference type="ChEBI" id="CHEBI:59789"/>
        <dbReference type="ChEBI" id="CHEBI:65314"/>
        <dbReference type="ChEBI" id="CHEBI:74486"/>
        <dbReference type="EC" id="2.1.1.177"/>
    </reaction>
</comment>
<comment type="subunit">
    <text evidence="1">Homodimer.</text>
</comment>
<comment type="subcellular location">
    <subcellularLocation>
        <location evidence="1">Cytoplasm</location>
    </subcellularLocation>
</comment>
<comment type="similarity">
    <text evidence="1">Belongs to the RNA methyltransferase RlmH family.</text>
</comment>
<protein>
    <recommendedName>
        <fullName evidence="1">Ribosomal RNA large subunit methyltransferase H</fullName>
        <ecNumber evidence="1">2.1.1.177</ecNumber>
    </recommendedName>
    <alternativeName>
        <fullName evidence="1">23S rRNA (pseudouridine1915-N3)-methyltransferase</fullName>
    </alternativeName>
    <alternativeName>
        <fullName evidence="1">23S rRNA m3Psi1915 methyltransferase</fullName>
    </alternativeName>
    <alternativeName>
        <fullName evidence="1">rRNA (pseudouridine-N3-)-methyltransferase RlmH</fullName>
    </alternativeName>
</protein>
<gene>
    <name evidence="1" type="primary">rlmH</name>
    <name type="ordered locus">XF_0338</name>
</gene>